<protein>
    <recommendedName>
        <fullName evidence="1">Pyridoxal 5'-phosphate synthase subunit PdxT</fullName>
        <ecNumber evidence="1">4.3.3.6</ecNumber>
    </recommendedName>
    <alternativeName>
        <fullName evidence="1">Pdx2</fullName>
    </alternativeName>
    <alternativeName>
        <fullName evidence="1">Pyridoxal 5'-phosphate synthase glutaminase subunit</fullName>
        <ecNumber evidence="1">3.5.1.2</ecNumber>
    </alternativeName>
</protein>
<gene>
    <name evidence="1" type="primary">pdxT</name>
    <name type="ordered locus">Cbei_5039</name>
</gene>
<sequence>MKVGVLSFQGGVIEHLNQIRALGHTGVEVKKEKDLDDIDAIILPGGESTTIGKLLKITGLIKSLKEKIESGLPTWGTCAGMILLANEVEGQEEKYLQLMDIKVKRNAFGTQIDSFKTHKVIEKISKDEMELVFIRAPYITEVKDNVRILCKVDDKIVAARQDNIIVTSFHPELTNDVTFLNYFLKSKWMK</sequence>
<proteinExistence type="inferred from homology"/>
<accession>A6M3G5</accession>
<dbReference type="EC" id="4.3.3.6" evidence="1"/>
<dbReference type="EC" id="3.5.1.2" evidence="1"/>
<dbReference type="EMBL" id="CP000721">
    <property type="protein sequence ID" value="ABR37145.1"/>
    <property type="molecule type" value="Genomic_DNA"/>
</dbReference>
<dbReference type="RefSeq" id="WP_012061188.1">
    <property type="nucleotide sequence ID" value="NC_009617.1"/>
</dbReference>
<dbReference type="SMR" id="A6M3G5"/>
<dbReference type="MEROPS" id="C26.A32"/>
<dbReference type="KEGG" id="cbe:Cbei_5039"/>
<dbReference type="eggNOG" id="COG0311">
    <property type="taxonomic scope" value="Bacteria"/>
</dbReference>
<dbReference type="HOGENOM" id="CLU_069674_2_0_9"/>
<dbReference type="UniPathway" id="UPA00245"/>
<dbReference type="Proteomes" id="UP000000565">
    <property type="component" value="Chromosome"/>
</dbReference>
<dbReference type="GO" id="GO:0005829">
    <property type="term" value="C:cytosol"/>
    <property type="evidence" value="ECO:0007669"/>
    <property type="project" value="TreeGrafter"/>
</dbReference>
<dbReference type="GO" id="GO:1903600">
    <property type="term" value="C:glutaminase complex"/>
    <property type="evidence" value="ECO:0007669"/>
    <property type="project" value="TreeGrafter"/>
</dbReference>
<dbReference type="GO" id="GO:0004359">
    <property type="term" value="F:glutaminase activity"/>
    <property type="evidence" value="ECO:0007669"/>
    <property type="project" value="UniProtKB-UniRule"/>
</dbReference>
<dbReference type="GO" id="GO:0036381">
    <property type="term" value="F:pyridoxal 5'-phosphate synthase (glutamine hydrolysing) activity"/>
    <property type="evidence" value="ECO:0007669"/>
    <property type="project" value="UniProtKB-UniRule"/>
</dbReference>
<dbReference type="GO" id="GO:0006543">
    <property type="term" value="P:glutamine catabolic process"/>
    <property type="evidence" value="ECO:0007669"/>
    <property type="project" value="UniProtKB-UniRule"/>
</dbReference>
<dbReference type="GO" id="GO:0042823">
    <property type="term" value="P:pyridoxal phosphate biosynthetic process"/>
    <property type="evidence" value="ECO:0007669"/>
    <property type="project" value="UniProtKB-UniRule"/>
</dbReference>
<dbReference type="GO" id="GO:0008614">
    <property type="term" value="P:pyridoxine metabolic process"/>
    <property type="evidence" value="ECO:0007669"/>
    <property type="project" value="TreeGrafter"/>
</dbReference>
<dbReference type="CDD" id="cd01749">
    <property type="entry name" value="GATase1_PB"/>
    <property type="match status" value="1"/>
</dbReference>
<dbReference type="FunFam" id="3.40.50.880:FF:000010">
    <property type="entry name" value="uncharacterized protein LOC100176842 isoform X2"/>
    <property type="match status" value="1"/>
</dbReference>
<dbReference type="Gene3D" id="3.40.50.880">
    <property type="match status" value="1"/>
</dbReference>
<dbReference type="HAMAP" id="MF_01615">
    <property type="entry name" value="PdxT"/>
    <property type="match status" value="1"/>
</dbReference>
<dbReference type="InterPro" id="IPR029062">
    <property type="entry name" value="Class_I_gatase-like"/>
</dbReference>
<dbReference type="InterPro" id="IPR002161">
    <property type="entry name" value="PdxT/SNO"/>
</dbReference>
<dbReference type="InterPro" id="IPR021196">
    <property type="entry name" value="PdxT/SNO_CS"/>
</dbReference>
<dbReference type="NCBIfam" id="TIGR03800">
    <property type="entry name" value="PLP_synth_Pdx2"/>
    <property type="match status" value="1"/>
</dbReference>
<dbReference type="PANTHER" id="PTHR31559">
    <property type="entry name" value="PYRIDOXAL 5'-PHOSPHATE SYNTHASE SUBUNIT SNO"/>
    <property type="match status" value="1"/>
</dbReference>
<dbReference type="PANTHER" id="PTHR31559:SF0">
    <property type="entry name" value="PYRIDOXAL 5'-PHOSPHATE SYNTHASE SUBUNIT SNO1-RELATED"/>
    <property type="match status" value="1"/>
</dbReference>
<dbReference type="Pfam" id="PF01174">
    <property type="entry name" value="SNO"/>
    <property type="match status" value="1"/>
</dbReference>
<dbReference type="PIRSF" id="PIRSF005639">
    <property type="entry name" value="Glut_amidoT_SNO"/>
    <property type="match status" value="1"/>
</dbReference>
<dbReference type="SUPFAM" id="SSF52317">
    <property type="entry name" value="Class I glutamine amidotransferase-like"/>
    <property type="match status" value="1"/>
</dbReference>
<dbReference type="PROSITE" id="PS01236">
    <property type="entry name" value="PDXT_SNO_1"/>
    <property type="match status" value="1"/>
</dbReference>
<dbReference type="PROSITE" id="PS51130">
    <property type="entry name" value="PDXT_SNO_2"/>
    <property type="match status" value="1"/>
</dbReference>
<keyword id="KW-0315">Glutamine amidotransferase</keyword>
<keyword id="KW-0378">Hydrolase</keyword>
<keyword id="KW-0456">Lyase</keyword>
<keyword id="KW-0663">Pyridoxal phosphate</keyword>
<evidence type="ECO:0000255" key="1">
    <source>
        <dbReference type="HAMAP-Rule" id="MF_01615"/>
    </source>
</evidence>
<reference key="1">
    <citation type="submission" date="2007-06" db="EMBL/GenBank/DDBJ databases">
        <title>Complete sequence of Clostridium beijerinckii NCIMB 8052.</title>
        <authorList>
            <consortium name="US DOE Joint Genome Institute"/>
            <person name="Copeland A."/>
            <person name="Lucas S."/>
            <person name="Lapidus A."/>
            <person name="Barry K."/>
            <person name="Detter J.C."/>
            <person name="Glavina del Rio T."/>
            <person name="Hammon N."/>
            <person name="Israni S."/>
            <person name="Dalin E."/>
            <person name="Tice H."/>
            <person name="Pitluck S."/>
            <person name="Sims D."/>
            <person name="Brettin T."/>
            <person name="Bruce D."/>
            <person name="Tapia R."/>
            <person name="Brainard J."/>
            <person name="Schmutz J."/>
            <person name="Larimer F."/>
            <person name="Land M."/>
            <person name="Hauser L."/>
            <person name="Kyrpides N."/>
            <person name="Mikhailova N."/>
            <person name="Bennet G."/>
            <person name="Cann I."/>
            <person name="Chen J.-S."/>
            <person name="Contreras A.L."/>
            <person name="Jones D."/>
            <person name="Kashket E."/>
            <person name="Mitchell W."/>
            <person name="Stoddard S."/>
            <person name="Schwarz W."/>
            <person name="Qureshi N."/>
            <person name="Young M."/>
            <person name="Shi Z."/>
            <person name="Ezeji T."/>
            <person name="White B."/>
            <person name="Blaschek H."/>
            <person name="Richardson P."/>
        </authorList>
    </citation>
    <scope>NUCLEOTIDE SEQUENCE [LARGE SCALE GENOMIC DNA]</scope>
    <source>
        <strain>ATCC 51743 / NCIMB 8052</strain>
    </source>
</reference>
<organism>
    <name type="scientific">Clostridium beijerinckii (strain ATCC 51743 / NCIMB 8052)</name>
    <name type="common">Clostridium acetobutylicum</name>
    <dbReference type="NCBI Taxonomy" id="290402"/>
    <lineage>
        <taxon>Bacteria</taxon>
        <taxon>Bacillati</taxon>
        <taxon>Bacillota</taxon>
        <taxon>Clostridia</taxon>
        <taxon>Eubacteriales</taxon>
        <taxon>Clostridiaceae</taxon>
        <taxon>Clostridium</taxon>
    </lineage>
</organism>
<feature type="chain" id="PRO_1000088047" description="Pyridoxal 5'-phosphate synthase subunit PdxT">
    <location>
        <begin position="1"/>
        <end position="190"/>
    </location>
</feature>
<feature type="active site" description="Nucleophile" evidence="1">
    <location>
        <position position="78"/>
    </location>
</feature>
<feature type="active site" description="Charge relay system" evidence="1">
    <location>
        <position position="170"/>
    </location>
</feature>
<feature type="active site" description="Charge relay system" evidence="1">
    <location>
        <position position="172"/>
    </location>
</feature>
<feature type="binding site" evidence="1">
    <location>
        <begin position="46"/>
        <end position="48"/>
    </location>
    <ligand>
        <name>L-glutamine</name>
        <dbReference type="ChEBI" id="CHEBI:58359"/>
    </ligand>
</feature>
<feature type="binding site" evidence="1">
    <location>
        <position position="105"/>
    </location>
    <ligand>
        <name>L-glutamine</name>
        <dbReference type="ChEBI" id="CHEBI:58359"/>
    </ligand>
</feature>
<feature type="binding site" evidence="1">
    <location>
        <begin position="134"/>
        <end position="135"/>
    </location>
    <ligand>
        <name>L-glutamine</name>
        <dbReference type="ChEBI" id="CHEBI:58359"/>
    </ligand>
</feature>
<comment type="function">
    <text evidence="1">Catalyzes the hydrolysis of glutamine to glutamate and ammonia as part of the biosynthesis of pyridoxal 5'-phosphate. The resulting ammonia molecule is channeled to the active site of PdxS.</text>
</comment>
<comment type="catalytic activity">
    <reaction evidence="1">
        <text>aldehydo-D-ribose 5-phosphate + D-glyceraldehyde 3-phosphate + L-glutamine = pyridoxal 5'-phosphate + L-glutamate + phosphate + 3 H2O + H(+)</text>
        <dbReference type="Rhea" id="RHEA:31507"/>
        <dbReference type="ChEBI" id="CHEBI:15377"/>
        <dbReference type="ChEBI" id="CHEBI:15378"/>
        <dbReference type="ChEBI" id="CHEBI:29985"/>
        <dbReference type="ChEBI" id="CHEBI:43474"/>
        <dbReference type="ChEBI" id="CHEBI:58273"/>
        <dbReference type="ChEBI" id="CHEBI:58359"/>
        <dbReference type="ChEBI" id="CHEBI:59776"/>
        <dbReference type="ChEBI" id="CHEBI:597326"/>
        <dbReference type="EC" id="4.3.3.6"/>
    </reaction>
</comment>
<comment type="catalytic activity">
    <reaction evidence="1">
        <text>L-glutamine + H2O = L-glutamate + NH4(+)</text>
        <dbReference type="Rhea" id="RHEA:15889"/>
        <dbReference type="ChEBI" id="CHEBI:15377"/>
        <dbReference type="ChEBI" id="CHEBI:28938"/>
        <dbReference type="ChEBI" id="CHEBI:29985"/>
        <dbReference type="ChEBI" id="CHEBI:58359"/>
        <dbReference type="EC" id="3.5.1.2"/>
    </reaction>
</comment>
<comment type="pathway">
    <text evidence="1">Cofactor biosynthesis; pyridoxal 5'-phosphate biosynthesis.</text>
</comment>
<comment type="subunit">
    <text evidence="1">In the presence of PdxS, forms a dodecamer of heterodimers. Only shows activity in the heterodimer.</text>
</comment>
<comment type="similarity">
    <text evidence="1">Belongs to the glutaminase PdxT/SNO family.</text>
</comment>
<name>PDXT_CLOB8</name>